<reference key="1">
    <citation type="journal article" date="2009" name="PLoS Genet.">
        <title>Organised genome dynamics in the Escherichia coli species results in highly diverse adaptive paths.</title>
        <authorList>
            <person name="Touchon M."/>
            <person name="Hoede C."/>
            <person name="Tenaillon O."/>
            <person name="Barbe V."/>
            <person name="Baeriswyl S."/>
            <person name="Bidet P."/>
            <person name="Bingen E."/>
            <person name="Bonacorsi S."/>
            <person name="Bouchier C."/>
            <person name="Bouvet O."/>
            <person name="Calteau A."/>
            <person name="Chiapello H."/>
            <person name="Clermont O."/>
            <person name="Cruveiller S."/>
            <person name="Danchin A."/>
            <person name="Diard M."/>
            <person name="Dossat C."/>
            <person name="Karoui M.E."/>
            <person name="Frapy E."/>
            <person name="Garry L."/>
            <person name="Ghigo J.M."/>
            <person name="Gilles A.M."/>
            <person name="Johnson J."/>
            <person name="Le Bouguenec C."/>
            <person name="Lescat M."/>
            <person name="Mangenot S."/>
            <person name="Martinez-Jehanne V."/>
            <person name="Matic I."/>
            <person name="Nassif X."/>
            <person name="Oztas S."/>
            <person name="Petit M.A."/>
            <person name="Pichon C."/>
            <person name="Rouy Z."/>
            <person name="Ruf C.S."/>
            <person name="Schneider D."/>
            <person name="Tourret J."/>
            <person name="Vacherie B."/>
            <person name="Vallenet D."/>
            <person name="Medigue C."/>
            <person name="Rocha E.P.C."/>
            <person name="Denamur E."/>
        </authorList>
    </citation>
    <scope>NUCLEOTIDE SEQUENCE [LARGE SCALE GENOMIC DNA]</scope>
    <source>
        <strain>IAI39 / ExPEC</strain>
    </source>
</reference>
<keyword id="KW-0067">ATP-binding</keyword>
<keyword id="KW-0238">DNA-binding</keyword>
<keyword id="KW-0547">Nucleotide-binding</keyword>
<keyword id="KW-0597">Phosphoprotein</keyword>
<keyword id="KW-0804">Transcription</keyword>
<keyword id="KW-0805">Transcription regulation</keyword>
<feature type="chain" id="PRO_1000141189" description="Anaerobic nitric oxide reductase transcription regulator NorR">
    <location>
        <begin position="1"/>
        <end position="504"/>
    </location>
</feature>
<feature type="domain" description="Sigma-54 factor interaction" evidence="1">
    <location>
        <begin position="187"/>
        <end position="416"/>
    </location>
</feature>
<feature type="DNA-binding region" description="H-T-H motif" evidence="1">
    <location>
        <begin position="479"/>
        <end position="498"/>
    </location>
</feature>
<feature type="binding site" evidence="1">
    <location>
        <begin position="215"/>
        <end position="222"/>
    </location>
    <ligand>
        <name>ATP</name>
        <dbReference type="ChEBI" id="CHEBI:30616"/>
    </ligand>
</feature>
<feature type="binding site" evidence="1">
    <location>
        <begin position="278"/>
        <end position="287"/>
    </location>
    <ligand>
        <name>ATP</name>
        <dbReference type="ChEBI" id="CHEBI:30616"/>
    </ligand>
</feature>
<feature type="modified residue" description="4-aspartylphosphate" evidence="1">
    <location>
        <position position="57"/>
    </location>
</feature>
<comment type="function">
    <text evidence="1">Required for the expression of anaerobic nitric oxide (NO) reductase, acts as a transcriptional activator for at least the norVW operon. Activation also requires sigma-54.</text>
</comment>
<comment type="pathway">
    <text evidence="1">Nitrogen metabolism; nitric oxide reduction.</text>
</comment>
<name>NORR_ECO7I</name>
<evidence type="ECO:0000255" key="1">
    <source>
        <dbReference type="HAMAP-Rule" id="MF_01314"/>
    </source>
</evidence>
<accession>B7NSI9</accession>
<protein>
    <recommendedName>
        <fullName evidence="1">Anaerobic nitric oxide reductase transcription regulator NorR</fullName>
    </recommendedName>
</protein>
<gene>
    <name evidence="1" type="primary">norR</name>
    <name type="ordered locus">ECIAI39_2895</name>
</gene>
<organism>
    <name type="scientific">Escherichia coli O7:K1 (strain IAI39 / ExPEC)</name>
    <dbReference type="NCBI Taxonomy" id="585057"/>
    <lineage>
        <taxon>Bacteria</taxon>
        <taxon>Pseudomonadati</taxon>
        <taxon>Pseudomonadota</taxon>
        <taxon>Gammaproteobacteria</taxon>
        <taxon>Enterobacterales</taxon>
        <taxon>Enterobacteriaceae</taxon>
        <taxon>Escherichia</taxon>
    </lineage>
</organism>
<sequence length="504" mass="55219">MSFSVDMLANIAIELQRGIGHQDRFQRLITTLRQVLECDASALLRYDSRQFIPLAIDGLAKDVLGRRFALEGHPRLEAIARAGDVVRFPADSELPDPYDGLIPGQESLKVHACVGLPLFAGQNLIGALTLDGMQPDQFDVFSDEELRLIAALAAGALSNALLIEQLESQNMLPGDAAPFEALKETQMIGLSPGMTQLKKEIEIVAASDLNVLISGETGTGKELVAKAIHEASPRAVNPLVYLNCAALPESVAESELFGHVKGAFTGAISNRSGKFEMADNGTLFLDEIGELSLALQAKLLRVLQYGDIQRVGDDRSLRVDVRVLAATNRDLREEVLAGRFRADLFHRLSVFPLSVPPLRERGDDVILLAGYFCEQCRLRLGLSRVVLSSGARNLLQHYSFPGNVRELEHAIHRAVVLARATRSGDEVILEAQHFAFPEVTLPPPEAAAVPIVKQNLREATEAFQRETIRQAQAQNHHNWAASARMLETDVANLHRLAKRLGLKD</sequence>
<proteinExistence type="inferred from homology"/>
<dbReference type="EMBL" id="CU928164">
    <property type="protein sequence ID" value="CAR19016.1"/>
    <property type="molecule type" value="Genomic_DNA"/>
</dbReference>
<dbReference type="RefSeq" id="WP_000010704.1">
    <property type="nucleotide sequence ID" value="NC_011750.1"/>
</dbReference>
<dbReference type="RefSeq" id="YP_002408828.1">
    <property type="nucleotide sequence ID" value="NC_011750.1"/>
</dbReference>
<dbReference type="SMR" id="B7NSI9"/>
<dbReference type="STRING" id="585057.ECIAI39_2895"/>
<dbReference type="KEGG" id="ect:ECIAI39_2895"/>
<dbReference type="PATRIC" id="fig|585057.6.peg.3003"/>
<dbReference type="HOGENOM" id="CLU_000445_125_0_6"/>
<dbReference type="UniPathway" id="UPA00638"/>
<dbReference type="Proteomes" id="UP000000749">
    <property type="component" value="Chromosome"/>
</dbReference>
<dbReference type="GO" id="GO:0005524">
    <property type="term" value="F:ATP binding"/>
    <property type="evidence" value="ECO:0007669"/>
    <property type="project" value="UniProtKB-UniRule"/>
</dbReference>
<dbReference type="GO" id="GO:0016887">
    <property type="term" value="F:ATP hydrolysis activity"/>
    <property type="evidence" value="ECO:0007669"/>
    <property type="project" value="InterPro"/>
</dbReference>
<dbReference type="GO" id="GO:0003677">
    <property type="term" value="F:DNA binding"/>
    <property type="evidence" value="ECO:0007669"/>
    <property type="project" value="UniProtKB-KW"/>
</dbReference>
<dbReference type="GO" id="GO:0003700">
    <property type="term" value="F:DNA-binding transcription factor activity"/>
    <property type="evidence" value="ECO:0007669"/>
    <property type="project" value="UniProtKB-UniRule"/>
</dbReference>
<dbReference type="GO" id="GO:0000160">
    <property type="term" value="P:phosphorelay signal transduction system"/>
    <property type="evidence" value="ECO:0007669"/>
    <property type="project" value="UniProtKB-UniRule"/>
</dbReference>
<dbReference type="CDD" id="cd00009">
    <property type="entry name" value="AAA"/>
    <property type="match status" value="1"/>
</dbReference>
<dbReference type="FunFam" id="1.10.10.60:FF:000188">
    <property type="entry name" value="Anaerobic nitric oxide reductase transcription regulator NorR"/>
    <property type="match status" value="1"/>
</dbReference>
<dbReference type="FunFam" id="1.10.8.60:FF:000045">
    <property type="entry name" value="Anaerobic nitric oxide reductase transcription regulator NorR"/>
    <property type="match status" value="1"/>
</dbReference>
<dbReference type="FunFam" id="3.30.450.40:FF:000021">
    <property type="entry name" value="Anaerobic nitric oxide reductase transcription regulator NorR"/>
    <property type="match status" value="1"/>
</dbReference>
<dbReference type="FunFam" id="3.40.50.300:FF:000006">
    <property type="entry name" value="DNA-binding transcriptional regulator NtrC"/>
    <property type="match status" value="1"/>
</dbReference>
<dbReference type="Gene3D" id="1.10.8.60">
    <property type="match status" value="1"/>
</dbReference>
<dbReference type="Gene3D" id="3.30.450.40">
    <property type="match status" value="1"/>
</dbReference>
<dbReference type="Gene3D" id="1.10.10.60">
    <property type="entry name" value="Homeodomain-like"/>
    <property type="match status" value="1"/>
</dbReference>
<dbReference type="Gene3D" id="3.40.50.300">
    <property type="entry name" value="P-loop containing nucleotide triphosphate hydrolases"/>
    <property type="match status" value="1"/>
</dbReference>
<dbReference type="HAMAP" id="MF_01314">
    <property type="entry name" value="NorR"/>
    <property type="match status" value="1"/>
</dbReference>
<dbReference type="InterPro" id="IPR003593">
    <property type="entry name" value="AAA+_ATPase"/>
</dbReference>
<dbReference type="InterPro" id="IPR003018">
    <property type="entry name" value="GAF"/>
</dbReference>
<dbReference type="InterPro" id="IPR029016">
    <property type="entry name" value="GAF-like_dom_sf"/>
</dbReference>
<dbReference type="InterPro" id="IPR009057">
    <property type="entry name" value="Homeodomain-like_sf"/>
</dbReference>
<dbReference type="InterPro" id="IPR023944">
    <property type="entry name" value="NorR"/>
</dbReference>
<dbReference type="InterPro" id="IPR027417">
    <property type="entry name" value="P-loop_NTPase"/>
</dbReference>
<dbReference type="InterPro" id="IPR002078">
    <property type="entry name" value="Sigma_54_int"/>
</dbReference>
<dbReference type="InterPro" id="IPR025662">
    <property type="entry name" value="Sigma_54_int_dom_ATP-bd_1"/>
</dbReference>
<dbReference type="InterPro" id="IPR025943">
    <property type="entry name" value="Sigma_54_int_dom_ATP-bd_2"/>
</dbReference>
<dbReference type="InterPro" id="IPR025944">
    <property type="entry name" value="Sigma_54_int_dom_CS"/>
</dbReference>
<dbReference type="NCBIfam" id="NF003451">
    <property type="entry name" value="PRK05022.1"/>
    <property type="match status" value="1"/>
</dbReference>
<dbReference type="PANTHER" id="PTHR32071:SF35">
    <property type="entry name" value="ANAEROBIC NITRIC OXIDE REDUCTASE TRANSCRIPTION REGULATOR NORR"/>
    <property type="match status" value="1"/>
</dbReference>
<dbReference type="PANTHER" id="PTHR32071">
    <property type="entry name" value="TRANSCRIPTIONAL REGULATORY PROTEIN"/>
    <property type="match status" value="1"/>
</dbReference>
<dbReference type="Pfam" id="PF01590">
    <property type="entry name" value="GAF"/>
    <property type="match status" value="1"/>
</dbReference>
<dbReference type="Pfam" id="PF00158">
    <property type="entry name" value="Sigma54_activat"/>
    <property type="match status" value="1"/>
</dbReference>
<dbReference type="SMART" id="SM00382">
    <property type="entry name" value="AAA"/>
    <property type="match status" value="1"/>
</dbReference>
<dbReference type="SMART" id="SM00065">
    <property type="entry name" value="GAF"/>
    <property type="match status" value="1"/>
</dbReference>
<dbReference type="SUPFAM" id="SSF55781">
    <property type="entry name" value="GAF domain-like"/>
    <property type="match status" value="1"/>
</dbReference>
<dbReference type="SUPFAM" id="SSF46689">
    <property type="entry name" value="Homeodomain-like"/>
    <property type="match status" value="1"/>
</dbReference>
<dbReference type="SUPFAM" id="SSF52540">
    <property type="entry name" value="P-loop containing nucleoside triphosphate hydrolases"/>
    <property type="match status" value="1"/>
</dbReference>
<dbReference type="PROSITE" id="PS00675">
    <property type="entry name" value="SIGMA54_INTERACT_1"/>
    <property type="match status" value="1"/>
</dbReference>
<dbReference type="PROSITE" id="PS00676">
    <property type="entry name" value="SIGMA54_INTERACT_2"/>
    <property type="match status" value="1"/>
</dbReference>
<dbReference type="PROSITE" id="PS00688">
    <property type="entry name" value="SIGMA54_INTERACT_3"/>
    <property type="match status" value="1"/>
</dbReference>
<dbReference type="PROSITE" id="PS50045">
    <property type="entry name" value="SIGMA54_INTERACT_4"/>
    <property type="match status" value="1"/>
</dbReference>